<feature type="chain" id="PRO_1000201635" description="Ribosome-binding factor A">
    <location>
        <begin position="1"/>
        <end position="119"/>
    </location>
</feature>
<name>RBFA_GEOSM</name>
<reference key="1">
    <citation type="submission" date="2009-07" db="EMBL/GenBank/DDBJ databases">
        <title>Complete sequence of Geobacter sp. M21.</title>
        <authorList>
            <consortium name="US DOE Joint Genome Institute"/>
            <person name="Lucas S."/>
            <person name="Copeland A."/>
            <person name="Lapidus A."/>
            <person name="Glavina del Rio T."/>
            <person name="Dalin E."/>
            <person name="Tice H."/>
            <person name="Bruce D."/>
            <person name="Goodwin L."/>
            <person name="Pitluck S."/>
            <person name="Saunders E."/>
            <person name="Brettin T."/>
            <person name="Detter J.C."/>
            <person name="Han C."/>
            <person name="Larimer F."/>
            <person name="Land M."/>
            <person name="Hauser L."/>
            <person name="Kyrpides N."/>
            <person name="Ovchinnikova G."/>
            <person name="Lovley D."/>
        </authorList>
    </citation>
    <scope>NUCLEOTIDE SEQUENCE [LARGE SCALE GENOMIC DNA]</scope>
    <source>
        <strain>M21</strain>
    </source>
</reference>
<gene>
    <name evidence="1" type="primary">rbfA</name>
    <name type="ordered locus">GM21_2980</name>
</gene>
<comment type="function">
    <text evidence="1">One of several proteins that assist in the late maturation steps of the functional core of the 30S ribosomal subunit. Associates with free 30S ribosomal subunits (but not with 30S subunits that are part of 70S ribosomes or polysomes). Required for efficient processing of 16S rRNA. May interact with the 5'-terminal helix region of 16S rRNA.</text>
</comment>
<comment type="subunit">
    <text evidence="1">Monomer. Binds 30S ribosomal subunits, but not 50S ribosomal subunits or 70S ribosomes.</text>
</comment>
<comment type="subcellular location">
    <subcellularLocation>
        <location evidence="1">Cytoplasm</location>
    </subcellularLocation>
</comment>
<comment type="similarity">
    <text evidence="1">Belongs to the RbfA family.</text>
</comment>
<proteinExistence type="inferred from homology"/>
<dbReference type="EMBL" id="CP001661">
    <property type="protein sequence ID" value="ACT19009.1"/>
    <property type="molecule type" value="Genomic_DNA"/>
</dbReference>
<dbReference type="SMR" id="C6E2P9"/>
<dbReference type="STRING" id="443144.GM21_2980"/>
<dbReference type="KEGG" id="gem:GM21_2980"/>
<dbReference type="eggNOG" id="COG0858">
    <property type="taxonomic scope" value="Bacteria"/>
</dbReference>
<dbReference type="HOGENOM" id="CLU_089475_6_3_7"/>
<dbReference type="OrthoDB" id="307788at2"/>
<dbReference type="GO" id="GO:0005829">
    <property type="term" value="C:cytosol"/>
    <property type="evidence" value="ECO:0007669"/>
    <property type="project" value="TreeGrafter"/>
</dbReference>
<dbReference type="GO" id="GO:0043024">
    <property type="term" value="F:ribosomal small subunit binding"/>
    <property type="evidence" value="ECO:0007669"/>
    <property type="project" value="TreeGrafter"/>
</dbReference>
<dbReference type="GO" id="GO:0030490">
    <property type="term" value="P:maturation of SSU-rRNA"/>
    <property type="evidence" value="ECO:0007669"/>
    <property type="project" value="UniProtKB-UniRule"/>
</dbReference>
<dbReference type="Gene3D" id="3.30.300.20">
    <property type="match status" value="1"/>
</dbReference>
<dbReference type="HAMAP" id="MF_00003">
    <property type="entry name" value="RbfA"/>
    <property type="match status" value="1"/>
</dbReference>
<dbReference type="InterPro" id="IPR015946">
    <property type="entry name" value="KH_dom-like_a/b"/>
</dbReference>
<dbReference type="InterPro" id="IPR000238">
    <property type="entry name" value="RbfA"/>
</dbReference>
<dbReference type="InterPro" id="IPR023799">
    <property type="entry name" value="RbfA_dom_sf"/>
</dbReference>
<dbReference type="InterPro" id="IPR020053">
    <property type="entry name" value="Ribosome-bd_factorA_CS"/>
</dbReference>
<dbReference type="NCBIfam" id="NF010388">
    <property type="entry name" value="PRK13815.1"/>
    <property type="match status" value="1"/>
</dbReference>
<dbReference type="NCBIfam" id="TIGR00082">
    <property type="entry name" value="rbfA"/>
    <property type="match status" value="1"/>
</dbReference>
<dbReference type="PANTHER" id="PTHR33515">
    <property type="entry name" value="RIBOSOME-BINDING FACTOR A, CHLOROPLASTIC-RELATED"/>
    <property type="match status" value="1"/>
</dbReference>
<dbReference type="PANTHER" id="PTHR33515:SF1">
    <property type="entry name" value="RIBOSOME-BINDING FACTOR A, CHLOROPLASTIC-RELATED"/>
    <property type="match status" value="1"/>
</dbReference>
<dbReference type="Pfam" id="PF02033">
    <property type="entry name" value="RBFA"/>
    <property type="match status" value="1"/>
</dbReference>
<dbReference type="SUPFAM" id="SSF89919">
    <property type="entry name" value="Ribosome-binding factor A, RbfA"/>
    <property type="match status" value="1"/>
</dbReference>
<dbReference type="PROSITE" id="PS01319">
    <property type="entry name" value="RBFA"/>
    <property type="match status" value="1"/>
</dbReference>
<organism>
    <name type="scientific">Geobacter sp. (strain M21)</name>
    <dbReference type="NCBI Taxonomy" id="443144"/>
    <lineage>
        <taxon>Bacteria</taxon>
        <taxon>Pseudomonadati</taxon>
        <taxon>Thermodesulfobacteriota</taxon>
        <taxon>Desulfuromonadia</taxon>
        <taxon>Geobacterales</taxon>
        <taxon>Geobacteraceae</taxon>
        <taxon>Geobacter</taxon>
    </lineage>
</organism>
<keyword id="KW-0963">Cytoplasm</keyword>
<keyword id="KW-0690">Ribosome biogenesis</keyword>
<accession>C6E2P9</accession>
<evidence type="ECO:0000255" key="1">
    <source>
        <dbReference type="HAMAP-Rule" id="MF_00003"/>
    </source>
</evidence>
<protein>
    <recommendedName>
        <fullName evidence="1">Ribosome-binding factor A</fullName>
    </recommendedName>
</protein>
<sequence length="119" mass="13328">MVKRSDKVGEEIHKIISELLIKGLKDPRIGFLTITGVKMTPDLRQATVYFTVHGSDEDKKNSEAGLNSAKGYIRKEIGQALKMRFVPEVLFKYDTSLDYGQHIESILKEIGATDDGEQS</sequence>